<evidence type="ECO:0000255" key="1">
    <source>
        <dbReference type="HAMAP-Rule" id="MF_00059"/>
    </source>
</evidence>
<proteinExistence type="inferred from homology"/>
<sequence length="336" mass="37239">MIQKNWQELIKPNKVEFSSSSRTRATLVAEPLERGFGLTLGNALRRVLLSSLRGAAVTAVQIDGVLHEFSSIPGVREDVTDIVLNIKEIAIKMDGDDAKRMVVRKQGPGVVTAGDIQTVGDIEILNPEHVICTLDEGAEIRMEFTVNNGKGYVPAERNRAEDAPIGLIPVDSLYSPVKKVSYKVENTREGQVLDYDKLNMTIETDGSITGEDAVAFAARILQDQLGVFVNFDEPQKETEEEAVTELAFNPALLKKVDELELSVRSANCLKNDNIVYIGDLIQKTEAEMLRTPNFGRKSLNEIKEVLASMGLHLGMEVPAWPPENIEDLAKRYEDQY</sequence>
<accession>Q2K9J2</accession>
<feature type="chain" id="PRO_0000264530" description="DNA-directed RNA polymerase subunit alpha">
    <location>
        <begin position="1"/>
        <end position="336"/>
    </location>
</feature>
<feature type="region of interest" description="Alpha N-terminal domain (alpha-NTD)" evidence="1">
    <location>
        <begin position="1"/>
        <end position="232"/>
    </location>
</feature>
<feature type="region of interest" description="Alpha C-terminal domain (alpha-CTD)" evidence="1">
    <location>
        <begin position="248"/>
        <end position="336"/>
    </location>
</feature>
<protein>
    <recommendedName>
        <fullName evidence="1">DNA-directed RNA polymerase subunit alpha</fullName>
        <shortName evidence="1">RNAP subunit alpha</shortName>
        <ecNumber evidence="1">2.7.7.6</ecNumber>
    </recommendedName>
    <alternativeName>
        <fullName evidence="1">RNA polymerase subunit alpha</fullName>
    </alternativeName>
    <alternativeName>
        <fullName evidence="1">Transcriptase subunit alpha</fullName>
    </alternativeName>
</protein>
<keyword id="KW-0240">DNA-directed RNA polymerase</keyword>
<keyword id="KW-0548">Nucleotidyltransferase</keyword>
<keyword id="KW-1185">Reference proteome</keyword>
<keyword id="KW-0804">Transcription</keyword>
<keyword id="KW-0808">Transferase</keyword>
<reference key="1">
    <citation type="journal article" date="2006" name="Proc. Natl. Acad. Sci. U.S.A.">
        <title>The partitioned Rhizobium etli genome: genetic and metabolic redundancy in seven interacting replicons.</title>
        <authorList>
            <person name="Gonzalez V."/>
            <person name="Santamaria R.I."/>
            <person name="Bustos P."/>
            <person name="Hernandez-Gonzalez I."/>
            <person name="Medrano-Soto A."/>
            <person name="Moreno-Hagelsieb G."/>
            <person name="Janga S.C."/>
            <person name="Ramirez M.A."/>
            <person name="Jimenez-Jacinto V."/>
            <person name="Collado-Vides J."/>
            <person name="Davila G."/>
        </authorList>
    </citation>
    <scope>NUCLEOTIDE SEQUENCE [LARGE SCALE GENOMIC DNA]</scope>
    <source>
        <strain>ATCC 51251 / DSM 11541 / JCM 21823 / NBRC 15573 / CFN 42</strain>
    </source>
</reference>
<name>RPOA_RHIEC</name>
<comment type="function">
    <text evidence="1">DNA-dependent RNA polymerase catalyzes the transcription of DNA into RNA using the four ribonucleoside triphosphates as substrates.</text>
</comment>
<comment type="catalytic activity">
    <reaction evidence="1">
        <text>RNA(n) + a ribonucleoside 5'-triphosphate = RNA(n+1) + diphosphate</text>
        <dbReference type="Rhea" id="RHEA:21248"/>
        <dbReference type="Rhea" id="RHEA-COMP:14527"/>
        <dbReference type="Rhea" id="RHEA-COMP:17342"/>
        <dbReference type="ChEBI" id="CHEBI:33019"/>
        <dbReference type="ChEBI" id="CHEBI:61557"/>
        <dbReference type="ChEBI" id="CHEBI:140395"/>
        <dbReference type="EC" id="2.7.7.6"/>
    </reaction>
</comment>
<comment type="subunit">
    <text evidence="1">Homodimer. The RNAP catalytic core consists of 2 alpha, 1 beta, 1 beta' and 1 omega subunit. When a sigma factor is associated with the core the holoenzyme is formed, which can initiate transcription.</text>
</comment>
<comment type="domain">
    <text evidence="1">The N-terminal domain is essential for RNAP assembly and basal transcription, whereas the C-terminal domain is involved in interaction with transcriptional regulators and with upstream promoter elements.</text>
</comment>
<comment type="similarity">
    <text evidence="1">Belongs to the RNA polymerase alpha chain family.</text>
</comment>
<dbReference type="EC" id="2.7.7.6" evidence="1"/>
<dbReference type="EMBL" id="CP000133">
    <property type="protein sequence ID" value="ABC90494.1"/>
    <property type="molecule type" value="Genomic_DNA"/>
</dbReference>
<dbReference type="RefSeq" id="WP_003547579.1">
    <property type="nucleotide sequence ID" value="NC_007761.1"/>
</dbReference>
<dbReference type="SMR" id="Q2K9J2"/>
<dbReference type="KEGG" id="ret:RHE_CH01699"/>
<dbReference type="eggNOG" id="COG0202">
    <property type="taxonomic scope" value="Bacteria"/>
</dbReference>
<dbReference type="HOGENOM" id="CLU_053084_0_0_5"/>
<dbReference type="OrthoDB" id="9805706at2"/>
<dbReference type="Proteomes" id="UP000001936">
    <property type="component" value="Chromosome"/>
</dbReference>
<dbReference type="GO" id="GO:0005737">
    <property type="term" value="C:cytoplasm"/>
    <property type="evidence" value="ECO:0007669"/>
    <property type="project" value="UniProtKB-ARBA"/>
</dbReference>
<dbReference type="GO" id="GO:0000428">
    <property type="term" value="C:DNA-directed RNA polymerase complex"/>
    <property type="evidence" value="ECO:0007669"/>
    <property type="project" value="UniProtKB-KW"/>
</dbReference>
<dbReference type="GO" id="GO:0003677">
    <property type="term" value="F:DNA binding"/>
    <property type="evidence" value="ECO:0007669"/>
    <property type="project" value="UniProtKB-UniRule"/>
</dbReference>
<dbReference type="GO" id="GO:0003899">
    <property type="term" value="F:DNA-directed RNA polymerase activity"/>
    <property type="evidence" value="ECO:0007669"/>
    <property type="project" value="UniProtKB-UniRule"/>
</dbReference>
<dbReference type="GO" id="GO:0046983">
    <property type="term" value="F:protein dimerization activity"/>
    <property type="evidence" value="ECO:0007669"/>
    <property type="project" value="InterPro"/>
</dbReference>
<dbReference type="GO" id="GO:0006351">
    <property type="term" value="P:DNA-templated transcription"/>
    <property type="evidence" value="ECO:0007669"/>
    <property type="project" value="UniProtKB-UniRule"/>
</dbReference>
<dbReference type="CDD" id="cd06928">
    <property type="entry name" value="RNAP_alpha_NTD"/>
    <property type="match status" value="1"/>
</dbReference>
<dbReference type="FunFam" id="1.10.150.20:FF:000001">
    <property type="entry name" value="DNA-directed RNA polymerase subunit alpha"/>
    <property type="match status" value="1"/>
</dbReference>
<dbReference type="FunFam" id="2.170.120.12:FF:000001">
    <property type="entry name" value="DNA-directed RNA polymerase subunit alpha"/>
    <property type="match status" value="1"/>
</dbReference>
<dbReference type="Gene3D" id="1.10.150.20">
    <property type="entry name" value="5' to 3' exonuclease, C-terminal subdomain"/>
    <property type="match status" value="1"/>
</dbReference>
<dbReference type="Gene3D" id="2.170.120.12">
    <property type="entry name" value="DNA-directed RNA polymerase, insert domain"/>
    <property type="match status" value="1"/>
</dbReference>
<dbReference type="Gene3D" id="3.30.1360.10">
    <property type="entry name" value="RNA polymerase, RBP11-like subunit"/>
    <property type="match status" value="1"/>
</dbReference>
<dbReference type="HAMAP" id="MF_00059">
    <property type="entry name" value="RNApol_bact_RpoA"/>
    <property type="match status" value="1"/>
</dbReference>
<dbReference type="InterPro" id="IPR011262">
    <property type="entry name" value="DNA-dir_RNA_pol_insert"/>
</dbReference>
<dbReference type="InterPro" id="IPR011263">
    <property type="entry name" value="DNA-dir_RNA_pol_RpoA/D/Rpb3"/>
</dbReference>
<dbReference type="InterPro" id="IPR011773">
    <property type="entry name" value="DNA-dir_RpoA"/>
</dbReference>
<dbReference type="InterPro" id="IPR036603">
    <property type="entry name" value="RBP11-like"/>
</dbReference>
<dbReference type="InterPro" id="IPR011260">
    <property type="entry name" value="RNAP_asu_C"/>
</dbReference>
<dbReference type="InterPro" id="IPR036643">
    <property type="entry name" value="RNApol_insert_sf"/>
</dbReference>
<dbReference type="NCBIfam" id="NF003513">
    <property type="entry name" value="PRK05182.1-2"/>
    <property type="match status" value="1"/>
</dbReference>
<dbReference type="NCBIfam" id="NF003519">
    <property type="entry name" value="PRK05182.2-5"/>
    <property type="match status" value="1"/>
</dbReference>
<dbReference type="NCBIfam" id="TIGR02027">
    <property type="entry name" value="rpoA"/>
    <property type="match status" value="1"/>
</dbReference>
<dbReference type="Pfam" id="PF01000">
    <property type="entry name" value="RNA_pol_A_bac"/>
    <property type="match status" value="1"/>
</dbReference>
<dbReference type="Pfam" id="PF03118">
    <property type="entry name" value="RNA_pol_A_CTD"/>
    <property type="match status" value="1"/>
</dbReference>
<dbReference type="Pfam" id="PF01193">
    <property type="entry name" value="RNA_pol_L"/>
    <property type="match status" value="1"/>
</dbReference>
<dbReference type="SMART" id="SM00662">
    <property type="entry name" value="RPOLD"/>
    <property type="match status" value="1"/>
</dbReference>
<dbReference type="SUPFAM" id="SSF47789">
    <property type="entry name" value="C-terminal domain of RNA polymerase alpha subunit"/>
    <property type="match status" value="1"/>
</dbReference>
<dbReference type="SUPFAM" id="SSF56553">
    <property type="entry name" value="Insert subdomain of RNA polymerase alpha subunit"/>
    <property type="match status" value="1"/>
</dbReference>
<dbReference type="SUPFAM" id="SSF55257">
    <property type="entry name" value="RBP11-like subunits of RNA polymerase"/>
    <property type="match status" value="1"/>
</dbReference>
<organism>
    <name type="scientific">Rhizobium etli (strain ATCC 51251 / DSM 11541 / JCM 21823 / NBRC 15573 / CFN 42)</name>
    <dbReference type="NCBI Taxonomy" id="347834"/>
    <lineage>
        <taxon>Bacteria</taxon>
        <taxon>Pseudomonadati</taxon>
        <taxon>Pseudomonadota</taxon>
        <taxon>Alphaproteobacteria</taxon>
        <taxon>Hyphomicrobiales</taxon>
        <taxon>Rhizobiaceae</taxon>
        <taxon>Rhizobium/Agrobacterium group</taxon>
        <taxon>Rhizobium</taxon>
    </lineage>
</organism>
<gene>
    <name evidence="1" type="primary">rpoA</name>
    <name type="ordered locus">RHE_CH01699</name>
</gene>